<gene>
    <name evidence="9" type="primary">Iyd</name>
    <name evidence="6" type="synonym">cdt</name>
    <name evidence="9" type="ORF">CG46438</name>
</gene>
<evidence type="ECO:0000250" key="1">
    <source>
        <dbReference type="UniProtKB" id="Q6PHW0"/>
    </source>
</evidence>
<evidence type="ECO:0000250" key="2">
    <source>
        <dbReference type="UniProtKB" id="Q9DCX8"/>
    </source>
</evidence>
<evidence type="ECO:0000255" key="3"/>
<evidence type="ECO:0000269" key="4">
    <source>
    </source>
</evidence>
<evidence type="ECO:0000269" key="5">
    <source>
    </source>
</evidence>
<evidence type="ECO:0000303" key="6">
    <source>
    </source>
</evidence>
<evidence type="ECO:0000305" key="7"/>
<evidence type="ECO:0000305" key="8">
    <source>
    </source>
</evidence>
<evidence type="ECO:0000312" key="9">
    <source>
        <dbReference type="FlyBase" id="FBgn0286980"/>
    </source>
</evidence>
<evidence type="ECO:0000312" key="10">
    <source>
        <dbReference type="Proteomes" id="UP000000803"/>
    </source>
</evidence>
<name>IYD_DROME</name>
<dbReference type="EC" id="1.21.1.1" evidence="4"/>
<dbReference type="EMBL" id="AE014296">
    <property type="protein sequence ID" value="ACZ94685.1"/>
    <property type="molecule type" value="Genomic_DNA"/>
</dbReference>
<dbReference type="EMBL" id="AE014296">
    <property type="protein sequence ID" value="QJC18614.1"/>
    <property type="molecule type" value="Genomic_DNA"/>
</dbReference>
<dbReference type="RefSeq" id="NP_001163414.1">
    <property type="nucleotide sequence ID" value="NM_001169943.1"/>
</dbReference>
<dbReference type="RefSeq" id="NP_001369045.1">
    <property type="nucleotide sequence ID" value="NM_001382155.1"/>
</dbReference>
<dbReference type="SMR" id="E1JIB2"/>
<dbReference type="EnsemblMetazoa" id="FBtr0475275">
    <property type="protein sequence ID" value="FBpp0423399"/>
    <property type="gene ID" value="FBgn0286980"/>
</dbReference>
<dbReference type="EnsemblMetazoa" id="FBtr0475279">
    <property type="protein sequence ID" value="FBpp0423404"/>
    <property type="gene ID" value="FBgn0286980"/>
</dbReference>
<dbReference type="GeneID" id="39242"/>
<dbReference type="KEGG" id="dme:Dmel_CG46438"/>
<dbReference type="AGR" id="FB:FBgn0286980"/>
<dbReference type="CTD" id="389434"/>
<dbReference type="FlyBase" id="FBgn0286980">
    <property type="gene designation" value="Iyd"/>
</dbReference>
<dbReference type="VEuPathDB" id="VectorBase:FBgn0286980"/>
<dbReference type="GeneTree" id="ENSGT00390000004348"/>
<dbReference type="HOGENOM" id="CLU_403487_0_0_1"/>
<dbReference type="OMA" id="GANHQPW"/>
<dbReference type="OrthoDB" id="41362at2759"/>
<dbReference type="BRENDA" id="1.21.1.1">
    <property type="organism ID" value="1994"/>
</dbReference>
<dbReference type="Reactome" id="R-DME-209968">
    <property type="pathway name" value="Thyroxine biosynthesis"/>
</dbReference>
<dbReference type="BioGRID-ORCS" id="39242">
    <property type="hits" value="0 hits in 1 CRISPR screen"/>
</dbReference>
<dbReference type="GenomeRNAi" id="39242"/>
<dbReference type="PRO" id="PR:E1JIB2"/>
<dbReference type="Proteomes" id="UP000000803">
    <property type="component" value="Chromosome 3L"/>
</dbReference>
<dbReference type="GO" id="GO:0005886">
    <property type="term" value="C:plasma membrane"/>
    <property type="evidence" value="ECO:0000318"/>
    <property type="project" value="GO_Central"/>
</dbReference>
<dbReference type="GO" id="GO:0010181">
    <property type="term" value="F:FMN binding"/>
    <property type="evidence" value="ECO:0000314"/>
    <property type="project" value="UniProtKB"/>
</dbReference>
<dbReference type="GO" id="GO:0004447">
    <property type="term" value="F:iodide peroxidase activity"/>
    <property type="evidence" value="ECO:0007669"/>
    <property type="project" value="UniProtKB-EC"/>
</dbReference>
<dbReference type="GO" id="GO:0140616">
    <property type="term" value="F:iodotyrosine deiodinase activity"/>
    <property type="evidence" value="ECO:0000314"/>
    <property type="project" value="FlyBase"/>
</dbReference>
<dbReference type="GO" id="GO:0016491">
    <property type="term" value="F:oxidoreductase activity"/>
    <property type="evidence" value="ECO:0000318"/>
    <property type="project" value="GO_Central"/>
</dbReference>
<dbReference type="GO" id="GO:1905516">
    <property type="term" value="P:positive regulation of fertilization"/>
    <property type="evidence" value="ECO:0000315"/>
    <property type="project" value="UniProtKB"/>
</dbReference>
<dbReference type="GO" id="GO:0006570">
    <property type="term" value="P:tyrosine metabolic process"/>
    <property type="evidence" value="ECO:0000318"/>
    <property type="project" value="GO_Central"/>
</dbReference>
<dbReference type="CDD" id="cd02144">
    <property type="entry name" value="iodotyrosine_dehalogenase"/>
    <property type="match status" value="1"/>
</dbReference>
<dbReference type="FunFam" id="3.40.109.10:FF:000004">
    <property type="entry name" value="Iodotyrosine deiodinase 1"/>
    <property type="match status" value="1"/>
</dbReference>
<dbReference type="Gene3D" id="3.40.109.10">
    <property type="entry name" value="NADH Oxidase"/>
    <property type="match status" value="1"/>
</dbReference>
<dbReference type="InterPro" id="IPR029479">
    <property type="entry name" value="Nitroreductase"/>
</dbReference>
<dbReference type="InterPro" id="IPR000415">
    <property type="entry name" value="Nitroreductase-like"/>
</dbReference>
<dbReference type="InterPro" id="IPR050627">
    <property type="entry name" value="Nitroreductase/BluB"/>
</dbReference>
<dbReference type="PANTHER" id="PTHR23026:SF90">
    <property type="entry name" value="IODOTYROSINE DEIODINASE 1"/>
    <property type="match status" value="1"/>
</dbReference>
<dbReference type="PANTHER" id="PTHR23026">
    <property type="entry name" value="NADPH NITROREDUCTASE"/>
    <property type="match status" value="1"/>
</dbReference>
<dbReference type="Pfam" id="PF00881">
    <property type="entry name" value="Nitroreductase"/>
    <property type="match status" value="1"/>
</dbReference>
<dbReference type="SUPFAM" id="SSF55469">
    <property type="entry name" value="FMN-dependent nitroreductase-like"/>
    <property type="match status" value="1"/>
</dbReference>
<keyword id="KW-1003">Cell membrane</keyword>
<keyword id="KW-0285">Flavoprotein</keyword>
<keyword id="KW-0288">FMN</keyword>
<keyword id="KW-0472">Membrane</keyword>
<keyword id="KW-0521">NADP</keyword>
<keyword id="KW-0560">Oxidoreductase</keyword>
<keyword id="KW-1185">Reference proteome</keyword>
<keyword id="KW-0812">Transmembrane</keyword>
<keyword id="KW-1133">Transmembrane helix</keyword>
<reference evidence="10" key="1">
    <citation type="journal article" date="2000" name="Science">
        <title>The genome sequence of Drosophila melanogaster.</title>
        <authorList>
            <person name="Adams M.D."/>
            <person name="Celniker S.E."/>
            <person name="Holt R.A."/>
            <person name="Evans C.A."/>
            <person name="Gocayne J.D."/>
            <person name="Amanatides P.G."/>
            <person name="Scherer S.E."/>
            <person name="Li P.W."/>
            <person name="Hoskins R.A."/>
            <person name="Galle R.F."/>
            <person name="George R.A."/>
            <person name="Lewis S.E."/>
            <person name="Richards S."/>
            <person name="Ashburner M."/>
            <person name="Henderson S.N."/>
            <person name="Sutton G.G."/>
            <person name="Wortman J.R."/>
            <person name="Yandell M.D."/>
            <person name="Zhang Q."/>
            <person name="Chen L.X."/>
            <person name="Brandon R.C."/>
            <person name="Rogers Y.-H.C."/>
            <person name="Blazej R.G."/>
            <person name="Champe M."/>
            <person name="Pfeiffer B.D."/>
            <person name="Wan K.H."/>
            <person name="Doyle C."/>
            <person name="Baxter E.G."/>
            <person name="Helt G."/>
            <person name="Nelson C.R."/>
            <person name="Miklos G.L.G."/>
            <person name="Abril J.F."/>
            <person name="Agbayani A."/>
            <person name="An H.-J."/>
            <person name="Andrews-Pfannkoch C."/>
            <person name="Baldwin D."/>
            <person name="Ballew R.M."/>
            <person name="Basu A."/>
            <person name="Baxendale J."/>
            <person name="Bayraktaroglu L."/>
            <person name="Beasley E.M."/>
            <person name="Beeson K.Y."/>
            <person name="Benos P.V."/>
            <person name="Berman B.P."/>
            <person name="Bhandari D."/>
            <person name="Bolshakov S."/>
            <person name="Borkova D."/>
            <person name="Botchan M.R."/>
            <person name="Bouck J."/>
            <person name="Brokstein P."/>
            <person name="Brottier P."/>
            <person name="Burtis K.C."/>
            <person name="Busam D.A."/>
            <person name="Butler H."/>
            <person name="Cadieu E."/>
            <person name="Center A."/>
            <person name="Chandra I."/>
            <person name="Cherry J.M."/>
            <person name="Cawley S."/>
            <person name="Dahlke C."/>
            <person name="Davenport L.B."/>
            <person name="Davies P."/>
            <person name="de Pablos B."/>
            <person name="Delcher A."/>
            <person name="Deng Z."/>
            <person name="Mays A.D."/>
            <person name="Dew I."/>
            <person name="Dietz S.M."/>
            <person name="Dodson K."/>
            <person name="Doup L.E."/>
            <person name="Downes M."/>
            <person name="Dugan-Rocha S."/>
            <person name="Dunkov B.C."/>
            <person name="Dunn P."/>
            <person name="Durbin K.J."/>
            <person name="Evangelista C.C."/>
            <person name="Ferraz C."/>
            <person name="Ferriera S."/>
            <person name="Fleischmann W."/>
            <person name="Fosler C."/>
            <person name="Gabrielian A.E."/>
            <person name="Garg N.S."/>
            <person name="Gelbart W.M."/>
            <person name="Glasser K."/>
            <person name="Glodek A."/>
            <person name="Gong F."/>
            <person name="Gorrell J.H."/>
            <person name="Gu Z."/>
            <person name="Guan P."/>
            <person name="Harris M."/>
            <person name="Harris N.L."/>
            <person name="Harvey D.A."/>
            <person name="Heiman T.J."/>
            <person name="Hernandez J.R."/>
            <person name="Houck J."/>
            <person name="Hostin D."/>
            <person name="Houston K.A."/>
            <person name="Howland T.J."/>
            <person name="Wei M.-H."/>
            <person name="Ibegwam C."/>
            <person name="Jalali M."/>
            <person name="Kalush F."/>
            <person name="Karpen G.H."/>
            <person name="Ke Z."/>
            <person name="Kennison J.A."/>
            <person name="Ketchum K.A."/>
            <person name="Kimmel B.E."/>
            <person name="Kodira C.D."/>
            <person name="Kraft C.L."/>
            <person name="Kravitz S."/>
            <person name="Kulp D."/>
            <person name="Lai Z."/>
            <person name="Lasko P."/>
            <person name="Lei Y."/>
            <person name="Levitsky A.A."/>
            <person name="Li J.H."/>
            <person name="Li Z."/>
            <person name="Liang Y."/>
            <person name="Lin X."/>
            <person name="Liu X."/>
            <person name="Mattei B."/>
            <person name="McIntosh T.C."/>
            <person name="McLeod M.P."/>
            <person name="McPherson D."/>
            <person name="Merkulov G."/>
            <person name="Milshina N.V."/>
            <person name="Mobarry C."/>
            <person name="Morris J."/>
            <person name="Moshrefi A."/>
            <person name="Mount S.M."/>
            <person name="Moy M."/>
            <person name="Murphy B."/>
            <person name="Murphy L."/>
            <person name="Muzny D.M."/>
            <person name="Nelson D.L."/>
            <person name="Nelson D.R."/>
            <person name="Nelson K.A."/>
            <person name="Nixon K."/>
            <person name="Nusskern D.R."/>
            <person name="Pacleb J.M."/>
            <person name="Palazzolo M."/>
            <person name="Pittman G.S."/>
            <person name="Pan S."/>
            <person name="Pollard J."/>
            <person name="Puri V."/>
            <person name="Reese M.G."/>
            <person name="Reinert K."/>
            <person name="Remington K."/>
            <person name="Saunders R.D.C."/>
            <person name="Scheeler F."/>
            <person name="Shen H."/>
            <person name="Shue B.C."/>
            <person name="Siden-Kiamos I."/>
            <person name="Simpson M."/>
            <person name="Skupski M.P."/>
            <person name="Smith T.J."/>
            <person name="Spier E."/>
            <person name="Spradling A.C."/>
            <person name="Stapleton M."/>
            <person name="Strong R."/>
            <person name="Sun E."/>
            <person name="Svirskas R."/>
            <person name="Tector C."/>
            <person name="Turner R."/>
            <person name="Venter E."/>
            <person name="Wang A.H."/>
            <person name="Wang X."/>
            <person name="Wang Z.-Y."/>
            <person name="Wassarman D.A."/>
            <person name="Weinstock G.M."/>
            <person name="Weissenbach J."/>
            <person name="Williams S.M."/>
            <person name="Woodage T."/>
            <person name="Worley K.C."/>
            <person name="Wu D."/>
            <person name="Yang S."/>
            <person name="Yao Q.A."/>
            <person name="Ye J."/>
            <person name="Yeh R.-F."/>
            <person name="Zaveri J.S."/>
            <person name="Zhan M."/>
            <person name="Zhang G."/>
            <person name="Zhao Q."/>
            <person name="Zheng L."/>
            <person name="Zheng X.H."/>
            <person name="Zhong F.N."/>
            <person name="Zhong W."/>
            <person name="Zhou X."/>
            <person name="Zhu S.C."/>
            <person name="Zhu X."/>
            <person name="Smith H.O."/>
            <person name="Gibbs R.A."/>
            <person name="Myers E.W."/>
            <person name="Rubin G.M."/>
            <person name="Venter J.C."/>
        </authorList>
    </citation>
    <scope>NUCLEOTIDE SEQUENCE [LARGE SCALE GENOMIC DNA]</scope>
    <source>
        <strain evidence="10">Berkeley</strain>
    </source>
</reference>
<reference evidence="10" key="2">
    <citation type="journal article" date="2002" name="Genome Biol.">
        <title>Annotation of the Drosophila melanogaster euchromatic genome: a systematic review.</title>
        <authorList>
            <person name="Misra S."/>
            <person name="Crosby M.A."/>
            <person name="Mungall C.J."/>
            <person name="Matthews B.B."/>
            <person name="Campbell K.S."/>
            <person name="Hradecky P."/>
            <person name="Huang Y."/>
            <person name="Kaminker J.S."/>
            <person name="Millburn G.H."/>
            <person name="Prochnik S.E."/>
            <person name="Smith C.D."/>
            <person name="Tupy J.L."/>
            <person name="Whitfield E.J."/>
            <person name="Bayraktaroglu L."/>
            <person name="Berman B.P."/>
            <person name="Bettencourt B.R."/>
            <person name="Celniker S.E."/>
            <person name="de Grey A.D.N.J."/>
            <person name="Drysdale R.A."/>
            <person name="Harris N.L."/>
            <person name="Richter J."/>
            <person name="Russo S."/>
            <person name="Schroeder A.J."/>
            <person name="Shu S.Q."/>
            <person name="Stapleton M."/>
            <person name="Yamada C."/>
            <person name="Ashburner M."/>
            <person name="Gelbart W.M."/>
            <person name="Rubin G.M."/>
            <person name="Lewis S.E."/>
        </authorList>
    </citation>
    <scope>GENOME REANNOTATION</scope>
    <source>
        <strain evidence="10">Berkeley</strain>
    </source>
</reference>
<reference evidence="7" key="3">
    <citation type="journal article" date="2016" name="Protein Sci.">
        <title>Functional analysis of iodotyrosine deiodinase from drosophila melanogaster.</title>
        <authorList>
            <person name="Phatarphekar A."/>
            <person name="Rokita S.E."/>
        </authorList>
    </citation>
    <scope>FUNCTION</scope>
    <scope>CATALYTIC ACTIVITY</scope>
    <scope>BIOPHYSICOCHEMICAL PROPERTIES</scope>
    <scope>COFACTOR</scope>
    <scope>MUTAGENESIS OF GLU-154; TYR-158 AND LYS-179</scope>
</reference>
<reference evidence="7" key="4">
    <citation type="journal article" date="2018" name="J. Biol. Chem.">
        <title>The importance of a halotyrosine dehalogenase for Drosophila fertility.</title>
        <authorList>
            <person name="Phatarphekar A."/>
            <person name="Su Q."/>
            <person name="Eun S.H."/>
            <person name="Chen X."/>
            <person name="Rokita S.E."/>
        </authorList>
    </citation>
    <scope>FUNCTION</scope>
    <scope>TISSUE SPECIFICITY</scope>
    <scope>DISRUPTION PHENOTYPE</scope>
    <scope>MUTAGENESIS OF GLU-154</scope>
</reference>
<comment type="function">
    <text evidence="4 5">Catalyzes the dehalogenation of halotyrosines such as 3-bromo-L-tyrosine, 3-chloro-L-tyrosine, 3-iodo-L-tyrosine and 3,5-diiodo-L-tyrosine (PubMed:27643701). Activity towards 3-fluoro-L-tyrosine is weak (PubMed:27643701). Important for male and female fertility (PubMed:29764939). May be involved in maintaining the viability of sperm, both during development in the testes and storage in the female spermatheca (PubMed:29764939).</text>
</comment>
<comment type="catalytic activity">
    <reaction evidence="4">
        <text>2 iodide + L-tyrosine + 2 NADP(+) = 3,5-diiodo-L-tyrosine + 2 NADPH + H(+)</text>
        <dbReference type="Rhea" id="RHEA:32479"/>
        <dbReference type="ChEBI" id="CHEBI:15378"/>
        <dbReference type="ChEBI" id="CHEBI:16382"/>
        <dbReference type="ChEBI" id="CHEBI:57506"/>
        <dbReference type="ChEBI" id="CHEBI:57783"/>
        <dbReference type="ChEBI" id="CHEBI:58315"/>
        <dbReference type="ChEBI" id="CHEBI:58349"/>
        <dbReference type="EC" id="1.21.1.1"/>
    </reaction>
    <physiologicalReaction direction="right-to-left" evidence="4">
        <dbReference type="Rhea" id="RHEA:32481"/>
    </physiologicalReaction>
</comment>
<comment type="catalytic activity">
    <reaction evidence="4">
        <text>iodide + L-tyrosine + NADP(+) = 3-iodo-L-tyrosine + NADPH</text>
        <dbReference type="Rhea" id="RHEA:27453"/>
        <dbReference type="ChEBI" id="CHEBI:16382"/>
        <dbReference type="ChEBI" id="CHEBI:57783"/>
        <dbReference type="ChEBI" id="CHEBI:58315"/>
        <dbReference type="ChEBI" id="CHEBI:58349"/>
        <dbReference type="ChEBI" id="CHEBI:59898"/>
    </reaction>
    <physiologicalReaction direction="right-to-left" evidence="4">
        <dbReference type="Rhea" id="RHEA:27455"/>
    </physiologicalReaction>
</comment>
<comment type="catalytic activity">
    <reaction evidence="4">
        <text>3-iodo-L-tyrosine + iodide + NADP(+) = 3,5-diiodo-L-tyrosine + NADPH + H(+)</text>
        <dbReference type="Rhea" id="RHEA:27457"/>
        <dbReference type="ChEBI" id="CHEBI:15378"/>
        <dbReference type="ChEBI" id="CHEBI:16382"/>
        <dbReference type="ChEBI" id="CHEBI:57506"/>
        <dbReference type="ChEBI" id="CHEBI:57783"/>
        <dbReference type="ChEBI" id="CHEBI:58349"/>
        <dbReference type="ChEBI" id="CHEBI:59898"/>
    </reaction>
    <physiologicalReaction direction="right-to-left" evidence="4">
        <dbReference type="Rhea" id="RHEA:27459"/>
    </physiologicalReaction>
</comment>
<comment type="catalytic activity">
    <reaction evidence="4">
        <text>L-tyrosine + chloride + NADP(+) = 3-chloro-L-tyrosine + NADPH</text>
        <dbReference type="Rhea" id="RHEA:70343"/>
        <dbReference type="ChEBI" id="CHEBI:17996"/>
        <dbReference type="ChEBI" id="CHEBI:57783"/>
        <dbReference type="ChEBI" id="CHEBI:58315"/>
        <dbReference type="ChEBI" id="CHEBI:58349"/>
        <dbReference type="ChEBI" id="CHEBI:189422"/>
    </reaction>
    <physiologicalReaction direction="right-to-left" evidence="4">
        <dbReference type="Rhea" id="RHEA:70345"/>
    </physiologicalReaction>
</comment>
<comment type="catalytic activity">
    <reaction evidence="4">
        <text>bromide + L-tyrosine + NADP(+) = 3-bromo-L-tyrosine + NADPH</text>
        <dbReference type="Rhea" id="RHEA:70347"/>
        <dbReference type="ChEBI" id="CHEBI:15858"/>
        <dbReference type="ChEBI" id="CHEBI:57783"/>
        <dbReference type="ChEBI" id="CHEBI:58315"/>
        <dbReference type="ChEBI" id="CHEBI:58349"/>
        <dbReference type="ChEBI" id="CHEBI:189423"/>
    </reaction>
    <physiologicalReaction direction="right-to-left" evidence="4">
        <dbReference type="Rhea" id="RHEA:70349"/>
    </physiologicalReaction>
</comment>
<comment type="cofactor">
    <cofactor evidence="4">
        <name>FMN</name>
        <dbReference type="ChEBI" id="CHEBI:58210"/>
    </cofactor>
</comment>
<comment type="biophysicochemical properties">
    <kinetics>
        <KM evidence="4">14 uM for 3-iodo-L-tyrosine (at pH 7.4 and 25 degrees Celsius)</KM>
        <KM evidence="4">8 uM for 3-bromo-L-tyrosine (at pH 7.4 and 25 degrees Celsius)</KM>
        <KM evidence="4">21 uM for 3-chloro-L-tyrosine (at pH 7.4 and 25 degrees Celsius)</KM>
        <KM evidence="4">11 uM for 3,5-diiodo-L-tyrosine (at pH 7.4 and 25 degrees Celsius)</KM>
        <text evidence="4">kcat is 12 sec(-1) for the dehalogenation of 3-iodo-L-tyrosine (at pH 7.4 and 25 degrees Celsius) (PubMed:27643701). kcat is 6.9 sec(-1) for the dehalogenation of 3-bromo-L-tyrosine (at pH 7.4 and 25 degrees Celsius) (PubMed:27643701). kcat is 5.0 sec(-1) for the dehalogenation of 3-chloro-L-tyrosine (at pH 7.4 and 25 degrees Celsius) (PubMed:27643701). kcat is 10.8 sec(-1) for the dehalogenation of 3,5-diiodo-L-tyrosine (at pH 7.4 and 25 degrees Celsius) (PubMed:27643701).</text>
    </kinetics>
</comment>
<comment type="subunit">
    <text evidence="1">Homodimer.</text>
</comment>
<comment type="subcellular location">
    <subcellularLocation>
        <location evidence="3">Cell membrane</location>
        <topology evidence="3">Single-pass membrane protein</topology>
    </subcellularLocation>
</comment>
<comment type="tissue specificity">
    <text evidence="5">Expressed in spermatocytes.</text>
</comment>
<comment type="disruption phenotype">
    <text evidence="5">Adults produce fewer progeny (PubMed:29764939). Larvae display an increase in survival when fed a diet enriched with 3-chloro-L-tyrosine (Cl-Tyr), whereas survival is unaffected when fed a diet containing 3-iodo-L-tyrosine (I-Tyr) or 3-bromo-L-tyrosine (Br-Tyr) (PubMed:29764939). Adult survival is unaffected when fed a diet supplemented with halotyrosines (PubMed:29764939).</text>
</comment>
<comment type="miscellaneous">
    <text evidence="4">Named condet in honor of Dr. Jean Francois Condet who discovered that ingestion of iodide could reduce goiter.</text>
</comment>
<comment type="similarity">
    <text evidence="7">Belongs to the nitroreductase family.</text>
</comment>
<sequence length="287" mass="32597">MDVDELISSSKLLKHWPSLFITLALIWIVKRLFFKGNRVLKTYNLDEQVEEEVEHFADLGDELQPALEDKPHVPFVPGQNLNPNGAKRLYELMRGRRSIRSFNSHPKPDLSVIEDCIRAAGTAPSGAHTEPWTYCVVQEPELKRSIREIVEQEELVNYSQRMHPQWVTDLRPLQTNHVKEYLTEAPYLILIFKQTYGLSENGKRMRRHYYNEISTSIAAGILLCALQAAGLASLVTTPLNCGPALRNLLGRPVNEKLLILLPVGYPKDGCTVPDLARKNLSNIMVTF</sequence>
<accession>E1JIB2</accession>
<feature type="chain" id="PRO_0000455636" description="Iodotyrosine deiodinase">
    <location>
        <begin position="1"/>
        <end position="287"/>
    </location>
</feature>
<feature type="transmembrane region" description="Helical" evidence="3">
    <location>
        <begin position="15"/>
        <end position="34"/>
    </location>
</feature>
<feature type="binding site" evidence="1">
    <location>
        <begin position="96"/>
        <end position="100"/>
    </location>
    <ligand>
        <name>FMN</name>
        <dbReference type="ChEBI" id="CHEBI:58210"/>
    </ligand>
</feature>
<feature type="binding site" evidence="2">
    <location>
        <begin position="125"/>
        <end position="126"/>
    </location>
    <ligand>
        <name>FMN</name>
        <dbReference type="ChEBI" id="CHEBI:58210"/>
    </ligand>
</feature>
<feature type="binding site" evidence="1">
    <location>
        <position position="125"/>
    </location>
    <ligand>
        <name>FMN</name>
        <dbReference type="ChEBI" id="CHEBI:58210"/>
    </ligand>
</feature>
<feature type="binding site" evidence="2">
    <location>
        <position position="127"/>
    </location>
    <ligand>
        <name>3,5-diiodo-L-tyrosine</name>
        <dbReference type="ChEBI" id="CHEBI:57506"/>
    </ligand>
</feature>
<feature type="binding site" evidence="2">
    <location>
        <position position="127"/>
    </location>
    <ligand>
        <name>3-iodo-L-tyrosine</name>
        <dbReference type="ChEBI" id="CHEBI:59898"/>
    </ligand>
</feature>
<feature type="binding site" evidence="4">
    <location>
        <position position="154"/>
    </location>
    <ligand>
        <name>3,5-diiodo-L-tyrosine</name>
        <dbReference type="ChEBI" id="CHEBI:57506"/>
    </ligand>
</feature>
<feature type="binding site" evidence="4">
    <location>
        <position position="154"/>
    </location>
    <ligand>
        <name>3-iodo-L-tyrosine</name>
        <dbReference type="ChEBI" id="CHEBI:59898"/>
    </ligand>
</feature>
<feature type="binding site" evidence="4">
    <location>
        <position position="158"/>
    </location>
    <ligand>
        <name>3,5-diiodo-L-tyrosine</name>
        <dbReference type="ChEBI" id="CHEBI:57506"/>
    </ligand>
</feature>
<feature type="binding site" evidence="4">
    <location>
        <position position="158"/>
    </location>
    <ligand>
        <name>3-iodo-L-tyrosine</name>
        <dbReference type="ChEBI" id="CHEBI:59898"/>
    </ligand>
</feature>
<feature type="binding site" evidence="4">
    <location>
        <position position="179"/>
    </location>
    <ligand>
        <name>3,5-diiodo-L-tyrosine</name>
        <dbReference type="ChEBI" id="CHEBI:57506"/>
    </ligand>
</feature>
<feature type="binding site" evidence="4">
    <location>
        <position position="179"/>
    </location>
    <ligand>
        <name>3-iodo-L-tyrosine</name>
        <dbReference type="ChEBI" id="CHEBI:59898"/>
    </ligand>
</feature>
<feature type="binding site" evidence="1">
    <location>
        <begin position="235"/>
        <end position="237"/>
    </location>
    <ligand>
        <name>FMN</name>
        <dbReference type="ChEBI" id="CHEBI:58210"/>
    </ligand>
</feature>
<feature type="binding site" evidence="1">
    <location>
        <position position="277"/>
    </location>
    <ligand>
        <name>FMN</name>
        <dbReference type="ChEBI" id="CHEBI:58210"/>
    </ligand>
</feature>
<feature type="mutagenesis site" description="Significant decrease in catalytic efficiency and reduced affinity for substrates 3-iodo-L-tyrosine (I-Tyr) and 3,5-diiodo-L-tyrosine (I2-Tyr). Larvae survival is decreased when fed a diet supplemented with 100 or 200um of I-Tyr but is increased when fed a diet enriched with 3-chloro-L-tyrosine (Cl-Tyr). However, adult survival is unaffected when fed a diet supplemented with halotyrosines." evidence="4 5">
    <original>E</original>
    <variation>Q</variation>
    <location>
        <position position="154"/>
    </location>
</feature>
<feature type="mutagenesis site" description="Moderate decrease in catalytic efficiency and reduced affinity for substrates I-Tyr and I2-Tyr." evidence="4">
    <original>Y</original>
    <variation>F</variation>
    <location>
        <position position="158"/>
    </location>
</feature>
<feature type="mutagenesis site" description="Moderate decrease in catalytic activity but strongly reduces affinity for substrates I-Tyr and I2-Tyr." evidence="4">
    <original>K</original>
    <variation>Q</variation>
    <location>
        <position position="179"/>
    </location>
</feature>
<protein>
    <recommendedName>
        <fullName evidence="9">Iodotyrosine deiodinase</fullName>
        <ecNumber evidence="4">1.21.1.1</ecNumber>
    </recommendedName>
    <alternativeName>
        <fullName evidence="8">Halotyrosine dehalogenase</fullName>
    </alternativeName>
    <alternativeName>
        <fullName evidence="6">Protein condet</fullName>
    </alternativeName>
</protein>
<organism evidence="10">
    <name type="scientific">Drosophila melanogaster</name>
    <name type="common">Fruit fly</name>
    <dbReference type="NCBI Taxonomy" id="7227"/>
    <lineage>
        <taxon>Eukaryota</taxon>
        <taxon>Metazoa</taxon>
        <taxon>Ecdysozoa</taxon>
        <taxon>Arthropoda</taxon>
        <taxon>Hexapoda</taxon>
        <taxon>Insecta</taxon>
        <taxon>Pterygota</taxon>
        <taxon>Neoptera</taxon>
        <taxon>Endopterygota</taxon>
        <taxon>Diptera</taxon>
        <taxon>Brachycera</taxon>
        <taxon>Muscomorpha</taxon>
        <taxon>Ephydroidea</taxon>
        <taxon>Drosophilidae</taxon>
        <taxon>Drosophila</taxon>
        <taxon>Sophophora</taxon>
    </lineage>
</organism>
<proteinExistence type="evidence at protein level"/>